<reference key="1">
    <citation type="journal article" date="2014" name="Toxicon">
        <title>The molecular diversity of toxin gene families in lethal Amanita mushrooms.</title>
        <authorList>
            <person name="Li P."/>
            <person name="Deng W."/>
            <person name="Li T."/>
        </authorList>
    </citation>
    <scope>NUCLEOTIDE SEQUENCE [GENOMIC DNA]</scope>
    <scope>FUNCTION</scope>
</reference>
<reference key="2">
    <citation type="journal article" date="2002" name="J. Toxicol. Clin. Toxicol.">
        <title>Treatment of amatoxin poisoning: 20-year retrospective analysis.</title>
        <authorList>
            <person name="Enjalbert F."/>
            <person name="Rapior S."/>
            <person name="Nouguier-Soule J."/>
            <person name="Guillon S."/>
            <person name="Amouroux N."/>
            <person name="Cabot C."/>
        </authorList>
    </citation>
    <scope>REVIEW ON TOXICITY</scope>
</reference>
<dbReference type="EMBL" id="KF552097">
    <property type="protein sequence ID" value="AHB18725.1"/>
    <property type="molecule type" value="Genomic_DNA"/>
</dbReference>
<dbReference type="EMBL" id="KF546290">
    <property type="protein sequence ID" value="AHX98314.1"/>
    <property type="molecule type" value="Genomic_DNA"/>
</dbReference>
<dbReference type="EMBL" id="KF546291">
    <property type="protein sequence ID" value="AHX98315.1"/>
    <property type="molecule type" value="Genomic_DNA"/>
</dbReference>
<dbReference type="EMBL" id="KF546292">
    <property type="protein sequence ID" value="AHX98316.1"/>
    <property type="molecule type" value="Genomic_DNA"/>
</dbReference>
<dbReference type="SMR" id="A0A023IWM8"/>
<dbReference type="GO" id="GO:0090729">
    <property type="term" value="F:toxin activity"/>
    <property type="evidence" value="ECO:0007669"/>
    <property type="project" value="UniProtKB-KW"/>
</dbReference>
<dbReference type="InterPro" id="IPR027582">
    <property type="entry name" value="Amanitin/phalloidin"/>
</dbReference>
<dbReference type="NCBIfam" id="TIGR04309">
    <property type="entry name" value="amanitin"/>
    <property type="match status" value="1"/>
</dbReference>
<dbReference type="Pfam" id="PF24112">
    <property type="entry name" value="Amanitin"/>
    <property type="match status" value="1"/>
</dbReference>
<organism>
    <name type="scientific">Amanita rimosa</name>
    <dbReference type="NCBI Taxonomy" id="580330"/>
    <lineage>
        <taxon>Eukaryota</taxon>
        <taxon>Fungi</taxon>
        <taxon>Dikarya</taxon>
        <taxon>Basidiomycota</taxon>
        <taxon>Agaricomycotina</taxon>
        <taxon>Agaricomycetes</taxon>
        <taxon>Agaricomycetidae</taxon>
        <taxon>Agaricales</taxon>
        <taxon>Pluteineae</taxon>
        <taxon>Amanitaceae</taxon>
        <taxon>Amanita</taxon>
    </lineage>
</organism>
<gene>
    <name evidence="5" type="primary">AMA</name>
</gene>
<name>AAMA1_AMARI</name>
<comment type="function">
    <text evidence="7">Major toxin belonging to the bicyclic octapeptides amatoxins that acts by binding non-competitively to RNA polymerase II and greatly slowing the elongation of transcripts from target promoters (PubMed:24613547).</text>
</comment>
<comment type="PTM">
    <text evidence="1 7">Processed by the macrocyclase-peptidase enzyme POPB to yield a toxic cyclic decapeptide (PubMed:24613547). POPB first removes 10 residues from the N-terminus (By similarity). Conformational trapping of the remaining peptide forces the enzyme to release this intermediate rather than proceed to macrocyclization (By similarity). The enzyme rebinds the remaining peptide in a different conformation and catalyzes macrocyclization of the N-terminal 8 residues (By similarity).</text>
</comment>
<comment type="miscellaneous">
    <text evidence="4">The typical symptoms of amatoxin poisoning are gastro-intestinal distress beginning 6-12 hours after ingestion, a remission phase lasting 12-24 hours, and progressive loss of liver function culminating in death within 3-5 days (PubMed:12475187). One of the few effective treatments is liver transplantation (PubMed:12475187).</text>
</comment>
<comment type="similarity">
    <text evidence="6">Belongs to the MSDIN fungal toxin family.</text>
</comment>
<sequence length="33" mass="3359">MSDINATRLPIWGIGCNPSVGDEVTALLASGEA</sequence>
<evidence type="ECO:0000250" key="1">
    <source>
        <dbReference type="UniProtKB" id="A0A067SLB9"/>
    </source>
</evidence>
<evidence type="ECO:0000250" key="2">
    <source>
        <dbReference type="UniProtKB" id="A8W7M4"/>
    </source>
</evidence>
<evidence type="ECO:0000250" key="3">
    <source>
        <dbReference type="UniProtKB" id="P85421"/>
    </source>
</evidence>
<evidence type="ECO:0000303" key="4">
    <source>
    </source>
</evidence>
<evidence type="ECO:0000303" key="5">
    <source>
    </source>
</evidence>
<evidence type="ECO:0000305" key="6"/>
<evidence type="ECO:0000305" key="7">
    <source>
    </source>
</evidence>
<proteinExistence type="inferred from homology"/>
<protein>
    <recommendedName>
        <fullName evidence="5">Alpha-amanitin proprotein</fullName>
    </recommendedName>
    <component>
        <recommendedName>
            <fullName evidence="5">Alpha-amanitin</fullName>
        </recommendedName>
        <alternativeName>
            <fullName evidence="5">Amatoxin</fullName>
        </alternativeName>
        <alternativeName>
            <fullName evidence="3">Gamma-amanitin</fullName>
        </alternativeName>
    </component>
</protein>
<feature type="propeptide" id="PRO_0000443584" evidence="2">
    <location>
        <begin position="1"/>
        <end position="10"/>
    </location>
</feature>
<feature type="peptide" id="PRO_0000443585" description="Alpha-amanitin" evidence="2">
    <location>
        <begin position="11"/>
        <end position="18"/>
    </location>
</feature>
<feature type="propeptide" id="PRO_0000443586" evidence="2">
    <location>
        <begin position="19"/>
        <end position="33"/>
    </location>
</feature>
<feature type="modified residue" description="(3R,4R)-4,5-dihydroxyisoleucine; in form alpha-amanitin" evidence="3">
    <location>
        <position position="11"/>
    </location>
</feature>
<feature type="modified residue" description="(3R,4S)-4-hydroxyisoleucine; in form gamma-amanitin" evidence="3">
    <location>
        <position position="11"/>
    </location>
</feature>
<feature type="modified residue" description="4-hydroxyproline" evidence="3">
    <location>
        <position position="18"/>
    </location>
</feature>
<feature type="cross-link" description="Cyclopeptide (Ile-Pro)" evidence="2">
    <location>
        <begin position="11"/>
        <end position="18"/>
    </location>
</feature>
<feature type="cross-link" description="2'-cysteinyl-6'-hydroxytryptophan sulfoxide (Trp-Cys)" evidence="3">
    <location>
        <begin position="12"/>
        <end position="16"/>
    </location>
</feature>
<accession>A0A023IWM8</accession>
<accession>A0A023UA20</accession>
<keyword id="KW-0379">Hydroxylation</keyword>
<keyword id="KW-0883">Thioether bond</keyword>
<keyword id="KW-0800">Toxin</keyword>